<feature type="chain" id="PRO_0000023306" description="Pyruvoyl-dependent arginine decarboxylase 2 subunit beta" evidence="1">
    <location>
        <begin position="1"/>
        <end position="42"/>
    </location>
</feature>
<feature type="chain" id="PRO_0000023307" description="Pyruvoyl-dependent arginine decarboxylase 2 subunit alpha" evidence="1">
    <location>
        <begin position="43"/>
        <end position="157"/>
    </location>
</feature>
<feature type="site" description="Cleavage (non-hydrolytic)" evidence="1">
    <location>
        <begin position="42"/>
        <end position="43"/>
    </location>
</feature>
<feature type="modified residue" description="Pyruvic acid (Ser)" evidence="1">
    <location>
        <position position="43"/>
    </location>
</feature>
<sequence>MALIPKEVFFVSGVGRHEDELVSFELALRDAGIERFNLVPVSSIVPPGCRVVSKEEGLRKLSPGQIVFCVMARYASNVEGREIFASVGAAFPEDKDMNGYIAEHSGEWYEGAEQHAKRLAEEMLKTQGSKVARTFAITARGKVKEFTTAVAAAVFVI</sequence>
<reference key="1">
    <citation type="journal article" date="1997" name="Nature">
        <title>The complete genome sequence of the hyperthermophilic, sulphate-reducing archaeon Archaeoglobus fulgidus.</title>
        <authorList>
            <person name="Klenk H.-P."/>
            <person name="Clayton R.A."/>
            <person name="Tomb J.-F."/>
            <person name="White O."/>
            <person name="Nelson K.E."/>
            <person name="Ketchum K.A."/>
            <person name="Dodson R.J."/>
            <person name="Gwinn M.L."/>
            <person name="Hickey E.K."/>
            <person name="Peterson J.D."/>
            <person name="Richardson D.L."/>
            <person name="Kerlavage A.R."/>
            <person name="Graham D.E."/>
            <person name="Kyrpides N.C."/>
            <person name="Fleischmann R.D."/>
            <person name="Quackenbush J."/>
            <person name="Lee N.H."/>
            <person name="Sutton G.G."/>
            <person name="Gill S.R."/>
            <person name="Kirkness E.F."/>
            <person name="Dougherty B.A."/>
            <person name="McKenney K."/>
            <person name="Adams M.D."/>
            <person name="Loftus B.J."/>
            <person name="Peterson S.N."/>
            <person name="Reich C.I."/>
            <person name="McNeil L.K."/>
            <person name="Badger J.H."/>
            <person name="Glodek A."/>
            <person name="Zhou L."/>
            <person name="Overbeek R."/>
            <person name="Gocayne J.D."/>
            <person name="Weidman J.F."/>
            <person name="McDonald L.A."/>
            <person name="Utterback T.R."/>
            <person name="Cotton M.D."/>
            <person name="Spriggs T."/>
            <person name="Artiach P."/>
            <person name="Kaine B.P."/>
            <person name="Sykes S.M."/>
            <person name="Sadow P.W."/>
            <person name="D'Andrea K.P."/>
            <person name="Bowman C."/>
            <person name="Fujii C."/>
            <person name="Garland S.A."/>
            <person name="Mason T.M."/>
            <person name="Olsen G.J."/>
            <person name="Fraser C.M."/>
            <person name="Smith H.O."/>
            <person name="Woese C.R."/>
            <person name="Venter J.C."/>
        </authorList>
    </citation>
    <scope>NUCLEOTIDE SEQUENCE [LARGE SCALE GENOMIC DNA]</scope>
    <source>
        <strain>ATCC 49558 / DSM 4304 / JCM 9628 / NBRC 100126 / VC-16</strain>
    </source>
</reference>
<name>PDAD2_ARCFU</name>
<dbReference type="EC" id="4.1.1.19"/>
<dbReference type="EMBL" id="AE000782">
    <property type="protein sequence ID" value="AAB91232.1"/>
    <property type="molecule type" value="Genomic_DNA"/>
</dbReference>
<dbReference type="PIR" id="H69553">
    <property type="entry name" value="H69553"/>
</dbReference>
<dbReference type="RefSeq" id="WP_010879918.1">
    <property type="nucleotide sequence ID" value="NC_000917.1"/>
</dbReference>
<dbReference type="SMR" id="O30240"/>
<dbReference type="STRING" id="224325.AF_2431"/>
<dbReference type="PaxDb" id="224325-AF_2431"/>
<dbReference type="EnsemblBacteria" id="AAB91232">
    <property type="protein sequence ID" value="AAB91232"/>
    <property type="gene ID" value="AF_2431"/>
</dbReference>
<dbReference type="KEGG" id="afu:AF_2431"/>
<dbReference type="eggNOG" id="arCOG04490">
    <property type="taxonomic scope" value="Archaea"/>
</dbReference>
<dbReference type="HOGENOM" id="CLU_114389_0_0_2"/>
<dbReference type="OrthoDB" id="30748at2157"/>
<dbReference type="PhylomeDB" id="O30240"/>
<dbReference type="Proteomes" id="UP000002199">
    <property type="component" value="Chromosome"/>
</dbReference>
<dbReference type="GO" id="GO:0008792">
    <property type="term" value="F:arginine decarboxylase activity"/>
    <property type="evidence" value="ECO:0007669"/>
    <property type="project" value="UniProtKB-UniRule"/>
</dbReference>
<dbReference type="GO" id="GO:0006527">
    <property type="term" value="P:arginine catabolic process"/>
    <property type="evidence" value="ECO:0007669"/>
    <property type="project" value="InterPro"/>
</dbReference>
<dbReference type="Gene3D" id="3.50.20.10">
    <property type="entry name" value="Pyruvoyl-Dependent Histidine Decarboxylase, subunit B"/>
    <property type="match status" value="1"/>
</dbReference>
<dbReference type="HAMAP" id="MF_01404">
    <property type="entry name" value="PvlArgDC"/>
    <property type="match status" value="1"/>
</dbReference>
<dbReference type="InterPro" id="IPR016104">
    <property type="entry name" value="Pyr-dep_his/arg-deCO2ase"/>
</dbReference>
<dbReference type="InterPro" id="IPR016105">
    <property type="entry name" value="Pyr-dep_his/arg-deCO2ase_sand"/>
</dbReference>
<dbReference type="InterPro" id="IPR002724">
    <property type="entry name" value="Pyruvoyl-dep_arg_deCO2ase"/>
</dbReference>
<dbReference type="NCBIfam" id="NF009064">
    <property type="entry name" value="PRK12398.1"/>
    <property type="match status" value="1"/>
</dbReference>
<dbReference type="NCBIfam" id="TIGR00286">
    <property type="entry name" value="pyruvoyl-dependent arginine decarboxylase"/>
    <property type="match status" value="1"/>
</dbReference>
<dbReference type="PANTHER" id="PTHR40438">
    <property type="entry name" value="PYRUVOYL-DEPENDENT ARGININE DECARBOXYLASE"/>
    <property type="match status" value="1"/>
</dbReference>
<dbReference type="PANTHER" id="PTHR40438:SF1">
    <property type="entry name" value="PYRUVOYL-DEPENDENT ARGININE DECARBOXYLASE"/>
    <property type="match status" value="1"/>
</dbReference>
<dbReference type="Pfam" id="PF01862">
    <property type="entry name" value="PvlArgDC"/>
    <property type="match status" value="1"/>
</dbReference>
<dbReference type="PIRSF" id="PIRSF005216">
    <property type="entry name" value="Pyruvoyl-dep_arg_deCO2ase"/>
    <property type="match status" value="1"/>
</dbReference>
<dbReference type="SFLD" id="SFLDG01170">
    <property type="entry name" value="Pyruvoyl-dependent_arginine_de"/>
    <property type="match status" value="1"/>
</dbReference>
<dbReference type="SFLD" id="SFLDS00055">
    <property type="entry name" value="Pyruvoyl-Dependent_Histidine/A"/>
    <property type="match status" value="1"/>
</dbReference>
<dbReference type="SUPFAM" id="SSF56271">
    <property type="entry name" value="Pyruvoyl-dependent histidine and arginine decarboxylases"/>
    <property type="match status" value="1"/>
</dbReference>
<comment type="catalytic activity">
    <reaction>
        <text>L-arginine + H(+) = agmatine + CO2</text>
        <dbReference type="Rhea" id="RHEA:17641"/>
        <dbReference type="ChEBI" id="CHEBI:15378"/>
        <dbReference type="ChEBI" id="CHEBI:16526"/>
        <dbReference type="ChEBI" id="CHEBI:32682"/>
        <dbReference type="ChEBI" id="CHEBI:58145"/>
        <dbReference type="EC" id="4.1.1.19"/>
    </reaction>
</comment>
<comment type="cofactor">
    <cofactor evidence="1">
        <name>pyruvate</name>
        <dbReference type="ChEBI" id="CHEBI:15361"/>
    </cofactor>
    <text evidence="1">Binds 1 pyruvoyl group covalently per subunit.</text>
</comment>
<comment type="similarity">
    <text evidence="2">Belongs to the PdaD family.</text>
</comment>
<organism>
    <name type="scientific">Archaeoglobus fulgidus (strain ATCC 49558 / DSM 4304 / JCM 9628 / NBRC 100126 / VC-16)</name>
    <dbReference type="NCBI Taxonomy" id="224325"/>
    <lineage>
        <taxon>Archaea</taxon>
        <taxon>Methanobacteriati</taxon>
        <taxon>Methanobacteriota</taxon>
        <taxon>Archaeoglobi</taxon>
        <taxon>Archaeoglobales</taxon>
        <taxon>Archaeoglobaceae</taxon>
        <taxon>Archaeoglobus</taxon>
    </lineage>
</organism>
<evidence type="ECO:0000250" key="1"/>
<evidence type="ECO:0000305" key="2"/>
<proteinExistence type="inferred from homology"/>
<gene>
    <name type="primary">pdaD2</name>
    <name type="ordered locus">AF_2431</name>
</gene>
<protein>
    <recommendedName>
        <fullName>Pyruvoyl-dependent arginine decarboxylase 2</fullName>
        <shortName>PvlArgDC 2</shortName>
        <ecNumber>4.1.1.19</ecNumber>
    </recommendedName>
    <component>
        <recommendedName>
            <fullName>Pyruvoyl-dependent arginine decarboxylase 2 subunit beta</fullName>
        </recommendedName>
    </component>
    <component>
        <recommendedName>
            <fullName>Pyruvoyl-dependent arginine decarboxylase 2 subunit alpha</fullName>
        </recommendedName>
    </component>
</protein>
<keyword id="KW-0210">Decarboxylase</keyword>
<keyword id="KW-0456">Lyase</keyword>
<keyword id="KW-0670">Pyruvate</keyword>
<keyword id="KW-1185">Reference proteome</keyword>
<accession>O30240</accession>